<keyword id="KW-0343">GTPase activation</keyword>
<keyword id="KW-1185">Reference proteome</keyword>
<gene>
    <name type="primary">ROPGAP1</name>
    <name type="ordered locus">At5g22400</name>
    <name type="ORF">MWD9.20</name>
</gene>
<dbReference type="EMBL" id="AB007651">
    <property type="protein sequence ID" value="BAB08339.1"/>
    <property type="molecule type" value="Genomic_DNA"/>
</dbReference>
<dbReference type="EMBL" id="CP002688">
    <property type="protein sequence ID" value="AED93022.1"/>
    <property type="molecule type" value="Genomic_DNA"/>
</dbReference>
<dbReference type="EMBL" id="AK229223">
    <property type="protein sequence ID" value="BAF01090.1"/>
    <property type="molecule type" value="mRNA"/>
</dbReference>
<dbReference type="EMBL" id="BT026360">
    <property type="protein sequence ID" value="ABH04467.1"/>
    <property type="molecule type" value="mRNA"/>
</dbReference>
<dbReference type="RefSeq" id="NP_197632.1">
    <property type="nucleotide sequence ID" value="NM_122145.5"/>
</dbReference>
<dbReference type="SMR" id="Q9FMR1"/>
<dbReference type="BioGRID" id="17576">
    <property type="interactions" value="1"/>
</dbReference>
<dbReference type="FunCoup" id="Q9FMR1">
    <property type="interactions" value="478"/>
</dbReference>
<dbReference type="STRING" id="3702.Q9FMR1"/>
<dbReference type="PaxDb" id="3702-AT5G22400.1"/>
<dbReference type="ProteomicsDB" id="236962"/>
<dbReference type="EnsemblPlants" id="AT5G22400.1">
    <property type="protein sequence ID" value="AT5G22400.1"/>
    <property type="gene ID" value="AT5G22400"/>
</dbReference>
<dbReference type="GeneID" id="832301"/>
<dbReference type="Gramene" id="AT5G22400.1">
    <property type="protein sequence ID" value="AT5G22400.1"/>
    <property type="gene ID" value="AT5G22400"/>
</dbReference>
<dbReference type="KEGG" id="ath:AT5G22400"/>
<dbReference type="Araport" id="AT5G22400"/>
<dbReference type="TAIR" id="AT5G22400"/>
<dbReference type="eggNOG" id="KOG4270">
    <property type="taxonomic scope" value="Eukaryota"/>
</dbReference>
<dbReference type="HOGENOM" id="CLU_031591_1_0_1"/>
<dbReference type="InParanoid" id="Q9FMR1"/>
<dbReference type="OMA" id="MAPQAQW"/>
<dbReference type="PhylomeDB" id="Q9FMR1"/>
<dbReference type="PRO" id="PR:Q9FMR1"/>
<dbReference type="Proteomes" id="UP000006548">
    <property type="component" value="Chromosome 5"/>
</dbReference>
<dbReference type="ExpressionAtlas" id="Q9FMR1">
    <property type="expression patterns" value="baseline and differential"/>
</dbReference>
<dbReference type="GO" id="GO:0005096">
    <property type="term" value="F:GTPase activator activity"/>
    <property type="evidence" value="ECO:0007669"/>
    <property type="project" value="UniProtKB-KW"/>
</dbReference>
<dbReference type="GO" id="GO:0007165">
    <property type="term" value="P:signal transduction"/>
    <property type="evidence" value="ECO:0007669"/>
    <property type="project" value="InterPro"/>
</dbReference>
<dbReference type="CDD" id="cd00132">
    <property type="entry name" value="CRIB"/>
    <property type="match status" value="1"/>
</dbReference>
<dbReference type="CDD" id="cd00159">
    <property type="entry name" value="RhoGAP"/>
    <property type="match status" value="1"/>
</dbReference>
<dbReference type="FunFam" id="1.10.555.10:FF:000046">
    <property type="entry name" value="Rho GTPase-activating protein 5"/>
    <property type="match status" value="1"/>
</dbReference>
<dbReference type="Gene3D" id="3.90.810.10">
    <property type="entry name" value="CRIB domain"/>
    <property type="match status" value="1"/>
</dbReference>
<dbReference type="Gene3D" id="1.10.555.10">
    <property type="entry name" value="Rho GTPase activation protein"/>
    <property type="match status" value="1"/>
</dbReference>
<dbReference type="InterPro" id="IPR000095">
    <property type="entry name" value="CRIB_dom"/>
</dbReference>
<dbReference type="InterPro" id="IPR036936">
    <property type="entry name" value="CRIB_dom_sf"/>
</dbReference>
<dbReference type="InterPro" id="IPR008936">
    <property type="entry name" value="Rho_GTPase_activation_prot"/>
</dbReference>
<dbReference type="InterPro" id="IPR000198">
    <property type="entry name" value="RhoGAP_dom"/>
</dbReference>
<dbReference type="InterPro" id="IPR044785">
    <property type="entry name" value="RopGAP1-5"/>
</dbReference>
<dbReference type="PANTHER" id="PTHR23177">
    <property type="entry name" value="MKIAA1688 PROTEIN"/>
    <property type="match status" value="1"/>
</dbReference>
<dbReference type="PANTHER" id="PTHR23177:SF64">
    <property type="entry name" value="RHO GTPASE-ACTIVATING PROTEIN 1"/>
    <property type="match status" value="1"/>
</dbReference>
<dbReference type="Pfam" id="PF00786">
    <property type="entry name" value="PBD"/>
    <property type="match status" value="1"/>
</dbReference>
<dbReference type="Pfam" id="PF00620">
    <property type="entry name" value="RhoGAP"/>
    <property type="match status" value="1"/>
</dbReference>
<dbReference type="SMART" id="SM00285">
    <property type="entry name" value="PBD"/>
    <property type="match status" value="1"/>
</dbReference>
<dbReference type="SMART" id="SM00324">
    <property type="entry name" value="RhoGAP"/>
    <property type="match status" value="1"/>
</dbReference>
<dbReference type="SUPFAM" id="SSF48350">
    <property type="entry name" value="GTPase activation domain, GAP"/>
    <property type="match status" value="1"/>
</dbReference>
<dbReference type="PROSITE" id="PS50108">
    <property type="entry name" value="CRIB"/>
    <property type="match status" value="1"/>
</dbReference>
<dbReference type="PROSITE" id="PS50238">
    <property type="entry name" value="RHOGAP"/>
    <property type="match status" value="1"/>
</dbReference>
<proteinExistence type="evidence at transcript level"/>
<organism>
    <name type="scientific">Arabidopsis thaliana</name>
    <name type="common">Mouse-ear cress</name>
    <dbReference type="NCBI Taxonomy" id="3702"/>
    <lineage>
        <taxon>Eukaryota</taxon>
        <taxon>Viridiplantae</taxon>
        <taxon>Streptophyta</taxon>
        <taxon>Embryophyta</taxon>
        <taxon>Tracheophyta</taxon>
        <taxon>Spermatophyta</taxon>
        <taxon>Magnoliopsida</taxon>
        <taxon>eudicotyledons</taxon>
        <taxon>Gunneridae</taxon>
        <taxon>Pentapetalae</taxon>
        <taxon>rosids</taxon>
        <taxon>malvids</taxon>
        <taxon>Brassicales</taxon>
        <taxon>Brassicaceae</taxon>
        <taxon>Camelineae</taxon>
        <taxon>Arabidopsis</taxon>
    </lineage>
</organism>
<comment type="function">
    <text evidence="1">Acts as a GTPase activator for the Rac-type GTPase by converting it to an inactive GDP-bound state.</text>
</comment>
<accession>Q9FMR1</accession>
<evidence type="ECO:0000250" key="1"/>
<evidence type="ECO:0000255" key="2">
    <source>
        <dbReference type="PROSITE-ProRule" id="PRU00057"/>
    </source>
</evidence>
<evidence type="ECO:0000255" key="3">
    <source>
        <dbReference type="PROSITE-ProRule" id="PRU00172"/>
    </source>
</evidence>
<evidence type="ECO:0000256" key="4">
    <source>
        <dbReference type="SAM" id="MobiDB-lite"/>
    </source>
</evidence>
<name>RGAP1_ARATH</name>
<protein>
    <recommendedName>
        <fullName>Rho GTPase-activating protein 1</fullName>
    </recommendedName>
    <alternativeName>
        <fullName>Rho-type GTPase-activating protein 1</fullName>
    </alternativeName>
</protein>
<reference key="1">
    <citation type="journal article" date="1997" name="DNA Res.">
        <title>Structural analysis of Arabidopsis thaliana chromosome 5. III. Sequence features of the regions of 1,191,918 bp covered by seventeen physically assigned P1 clones.</title>
        <authorList>
            <person name="Nakamura Y."/>
            <person name="Sato S."/>
            <person name="Kaneko T."/>
            <person name="Kotani H."/>
            <person name="Asamizu E."/>
            <person name="Miyajima N."/>
            <person name="Tabata S."/>
        </authorList>
    </citation>
    <scope>NUCLEOTIDE SEQUENCE [LARGE SCALE GENOMIC DNA]</scope>
    <source>
        <strain>cv. Columbia</strain>
    </source>
</reference>
<reference key="2">
    <citation type="journal article" date="2017" name="Plant J.">
        <title>Araport11: a complete reannotation of the Arabidopsis thaliana reference genome.</title>
        <authorList>
            <person name="Cheng C.Y."/>
            <person name="Krishnakumar V."/>
            <person name="Chan A.P."/>
            <person name="Thibaud-Nissen F."/>
            <person name="Schobel S."/>
            <person name="Town C.D."/>
        </authorList>
    </citation>
    <scope>GENOME REANNOTATION</scope>
    <source>
        <strain>cv. Columbia</strain>
    </source>
</reference>
<reference key="3">
    <citation type="submission" date="2006-07" db="EMBL/GenBank/DDBJ databases">
        <title>Large-scale analysis of RIKEN Arabidopsis full-length (RAFL) cDNAs.</title>
        <authorList>
            <person name="Totoki Y."/>
            <person name="Seki M."/>
            <person name="Ishida J."/>
            <person name="Nakajima M."/>
            <person name="Enju A."/>
            <person name="Kamiya A."/>
            <person name="Narusaka M."/>
            <person name="Shin-i T."/>
            <person name="Nakagawa M."/>
            <person name="Sakamoto N."/>
            <person name="Oishi K."/>
            <person name="Kohara Y."/>
            <person name="Kobayashi M."/>
            <person name="Toyoda A."/>
            <person name="Sakaki Y."/>
            <person name="Sakurai T."/>
            <person name="Iida K."/>
            <person name="Akiyama K."/>
            <person name="Satou M."/>
            <person name="Toyoda T."/>
            <person name="Konagaya A."/>
            <person name="Carninci P."/>
            <person name="Kawai J."/>
            <person name="Hayashizaki Y."/>
            <person name="Shinozaki K."/>
        </authorList>
    </citation>
    <scope>NUCLEOTIDE SEQUENCE [LARGE SCALE MRNA]</scope>
    <source>
        <strain>cv. Columbia</strain>
    </source>
</reference>
<reference key="4">
    <citation type="submission" date="2006-08" db="EMBL/GenBank/DDBJ databases">
        <title>Arabidopsis ORF Clones.</title>
        <authorList>
            <person name="Quinitio C."/>
            <person name="Chen H."/>
            <person name="Kim C.J."/>
            <person name="Shinn P."/>
            <person name="Ecker J.R."/>
        </authorList>
    </citation>
    <scope>NUCLEOTIDE SEQUENCE [LARGE SCALE MRNA]</scope>
    <source>
        <strain>cv. Columbia</strain>
    </source>
</reference>
<sequence length="466" mass="51991">MTEVLHFPSSPSASHSSSSSSSSPSPSSLSYASRSNATLLISSDHNRRNPVARFDQDVDFHASIEEQDLRRRSSTDGGEEDDGGEDQISLLALLVAIFRRSLISCKSNRRELCSMEIGWPTNVRHVAHVTFDRFNGFLGLPVEFEPEVPRRAPSASATVFGVSTESMQLSYDSRGNCVPTILLLMQNCLYSQGGLQAEGIFRLTAENSEEEAVREQLNRGFIPERIDVHCLAGLIKAWFRELPTSVLDSLSPEQVMQCQTEEENVELVRLLPPTEAALLDWAINLMADVVQYEHLNKMNSRNIAMVFAPNMTQMDDPLTALMYAVQVMNFLKTLIEKTLRERQDSVVEQAHAFPLEPSDESGHQSPSQSLAFNTSEQSEETQSDNIENAENQSSSSEISDELTLENNACEQRETDFGKYRTGRLSDSSQQVVLNLDPPAQWPVGRTKGLTNLSRVGSRVERTEAWR</sequence>
<feature type="chain" id="PRO_0000422716" description="Rho GTPase-activating protein 1">
    <location>
        <begin position="1"/>
        <end position="466"/>
    </location>
</feature>
<feature type="domain" description="CRIB" evidence="2">
    <location>
        <begin position="117"/>
        <end position="130"/>
    </location>
</feature>
<feature type="domain" description="Rho-GAP" evidence="3">
    <location>
        <begin position="162"/>
        <end position="342"/>
    </location>
</feature>
<feature type="region of interest" description="Disordered" evidence="4">
    <location>
        <begin position="1"/>
        <end position="31"/>
    </location>
</feature>
<feature type="region of interest" description="Disordered" evidence="4">
    <location>
        <begin position="65"/>
        <end position="84"/>
    </location>
</feature>
<feature type="region of interest" description="Disordered" evidence="4">
    <location>
        <begin position="354"/>
        <end position="402"/>
    </location>
</feature>
<feature type="compositionally biased region" description="Low complexity" evidence="4">
    <location>
        <begin position="8"/>
        <end position="31"/>
    </location>
</feature>
<feature type="compositionally biased region" description="Basic and acidic residues" evidence="4">
    <location>
        <begin position="65"/>
        <end position="74"/>
    </location>
</feature>
<feature type="compositionally biased region" description="Polar residues" evidence="4">
    <location>
        <begin position="363"/>
        <end position="376"/>
    </location>
</feature>
<feature type="compositionally biased region" description="Polar residues" evidence="4">
    <location>
        <begin position="383"/>
        <end position="397"/>
    </location>
</feature>
<feature type="site" description="Arginine finger; crucial for GTP hydrolysis by stabilizing the transition state" evidence="3">
    <location>
        <position position="202"/>
    </location>
</feature>